<dbReference type="EC" id="6.3.4.2" evidence="1"/>
<dbReference type="EMBL" id="BX571657">
    <property type="protein sequence ID" value="CAE09382.1"/>
    <property type="molecule type" value="Genomic_DNA"/>
</dbReference>
<dbReference type="RefSeq" id="WP_011138182.1">
    <property type="nucleotide sequence ID" value="NC_005090.1"/>
</dbReference>
<dbReference type="SMR" id="Q7MAI3"/>
<dbReference type="STRING" id="273121.WS0224"/>
<dbReference type="MEROPS" id="C26.964"/>
<dbReference type="KEGG" id="wsu:WS0224"/>
<dbReference type="eggNOG" id="COG0504">
    <property type="taxonomic scope" value="Bacteria"/>
</dbReference>
<dbReference type="HOGENOM" id="CLU_011675_5_0_7"/>
<dbReference type="UniPathway" id="UPA00159">
    <property type="reaction ID" value="UER00277"/>
</dbReference>
<dbReference type="Proteomes" id="UP000000422">
    <property type="component" value="Chromosome"/>
</dbReference>
<dbReference type="GO" id="GO:0005829">
    <property type="term" value="C:cytosol"/>
    <property type="evidence" value="ECO:0007669"/>
    <property type="project" value="TreeGrafter"/>
</dbReference>
<dbReference type="GO" id="GO:0005524">
    <property type="term" value="F:ATP binding"/>
    <property type="evidence" value="ECO:0007669"/>
    <property type="project" value="UniProtKB-KW"/>
</dbReference>
<dbReference type="GO" id="GO:0003883">
    <property type="term" value="F:CTP synthase activity"/>
    <property type="evidence" value="ECO:0007669"/>
    <property type="project" value="UniProtKB-UniRule"/>
</dbReference>
<dbReference type="GO" id="GO:0004359">
    <property type="term" value="F:glutaminase activity"/>
    <property type="evidence" value="ECO:0007669"/>
    <property type="project" value="RHEA"/>
</dbReference>
<dbReference type="GO" id="GO:0042802">
    <property type="term" value="F:identical protein binding"/>
    <property type="evidence" value="ECO:0007669"/>
    <property type="project" value="TreeGrafter"/>
</dbReference>
<dbReference type="GO" id="GO:0046872">
    <property type="term" value="F:metal ion binding"/>
    <property type="evidence" value="ECO:0007669"/>
    <property type="project" value="UniProtKB-KW"/>
</dbReference>
<dbReference type="GO" id="GO:0044210">
    <property type="term" value="P:'de novo' CTP biosynthetic process"/>
    <property type="evidence" value="ECO:0007669"/>
    <property type="project" value="UniProtKB-UniRule"/>
</dbReference>
<dbReference type="GO" id="GO:0019856">
    <property type="term" value="P:pyrimidine nucleobase biosynthetic process"/>
    <property type="evidence" value="ECO:0007669"/>
    <property type="project" value="TreeGrafter"/>
</dbReference>
<dbReference type="CDD" id="cd03113">
    <property type="entry name" value="CTPS_N"/>
    <property type="match status" value="1"/>
</dbReference>
<dbReference type="CDD" id="cd01746">
    <property type="entry name" value="GATase1_CTP_Synthase"/>
    <property type="match status" value="1"/>
</dbReference>
<dbReference type="FunFam" id="3.40.50.300:FF:000009">
    <property type="entry name" value="CTP synthase"/>
    <property type="match status" value="1"/>
</dbReference>
<dbReference type="FunFam" id="3.40.50.880:FF:000002">
    <property type="entry name" value="CTP synthase"/>
    <property type="match status" value="1"/>
</dbReference>
<dbReference type="Gene3D" id="3.40.50.880">
    <property type="match status" value="1"/>
</dbReference>
<dbReference type="Gene3D" id="3.40.50.300">
    <property type="entry name" value="P-loop containing nucleotide triphosphate hydrolases"/>
    <property type="match status" value="1"/>
</dbReference>
<dbReference type="HAMAP" id="MF_01227">
    <property type="entry name" value="PyrG"/>
    <property type="match status" value="1"/>
</dbReference>
<dbReference type="InterPro" id="IPR029062">
    <property type="entry name" value="Class_I_gatase-like"/>
</dbReference>
<dbReference type="InterPro" id="IPR004468">
    <property type="entry name" value="CTP_synthase"/>
</dbReference>
<dbReference type="InterPro" id="IPR017456">
    <property type="entry name" value="CTP_synthase_N"/>
</dbReference>
<dbReference type="InterPro" id="IPR017926">
    <property type="entry name" value="GATASE"/>
</dbReference>
<dbReference type="InterPro" id="IPR033828">
    <property type="entry name" value="GATase1_CTP_Synthase"/>
</dbReference>
<dbReference type="InterPro" id="IPR027417">
    <property type="entry name" value="P-loop_NTPase"/>
</dbReference>
<dbReference type="NCBIfam" id="NF003792">
    <property type="entry name" value="PRK05380.1"/>
    <property type="match status" value="1"/>
</dbReference>
<dbReference type="NCBIfam" id="TIGR00337">
    <property type="entry name" value="PyrG"/>
    <property type="match status" value="1"/>
</dbReference>
<dbReference type="PANTHER" id="PTHR11550">
    <property type="entry name" value="CTP SYNTHASE"/>
    <property type="match status" value="1"/>
</dbReference>
<dbReference type="PANTHER" id="PTHR11550:SF0">
    <property type="entry name" value="CTP SYNTHASE-RELATED"/>
    <property type="match status" value="1"/>
</dbReference>
<dbReference type="Pfam" id="PF06418">
    <property type="entry name" value="CTP_synth_N"/>
    <property type="match status" value="1"/>
</dbReference>
<dbReference type="Pfam" id="PF00117">
    <property type="entry name" value="GATase"/>
    <property type="match status" value="1"/>
</dbReference>
<dbReference type="SUPFAM" id="SSF52317">
    <property type="entry name" value="Class I glutamine amidotransferase-like"/>
    <property type="match status" value="1"/>
</dbReference>
<dbReference type="SUPFAM" id="SSF52540">
    <property type="entry name" value="P-loop containing nucleoside triphosphate hydrolases"/>
    <property type="match status" value="1"/>
</dbReference>
<dbReference type="PROSITE" id="PS51273">
    <property type="entry name" value="GATASE_TYPE_1"/>
    <property type="match status" value="1"/>
</dbReference>
<gene>
    <name evidence="1" type="primary">pyrG</name>
    <name type="ordered locus">WS0224</name>
</gene>
<name>PYRG_WOLSU</name>
<proteinExistence type="inferred from homology"/>
<feature type="chain" id="PRO_0000266262" description="CTP synthase">
    <location>
        <begin position="1"/>
        <end position="552"/>
    </location>
</feature>
<feature type="domain" description="Glutamine amidotransferase type-1" evidence="1">
    <location>
        <begin position="298"/>
        <end position="548"/>
    </location>
</feature>
<feature type="region of interest" description="Amidoligase domain" evidence="1">
    <location>
        <begin position="1"/>
        <end position="273"/>
    </location>
</feature>
<feature type="active site" description="Nucleophile; for glutamine hydrolysis" evidence="1">
    <location>
        <position position="386"/>
    </location>
</feature>
<feature type="active site" evidence="1">
    <location>
        <position position="521"/>
    </location>
</feature>
<feature type="active site" evidence="1">
    <location>
        <position position="523"/>
    </location>
</feature>
<feature type="binding site" evidence="1">
    <location>
        <position position="21"/>
    </location>
    <ligand>
        <name>CTP</name>
        <dbReference type="ChEBI" id="CHEBI:37563"/>
        <note>allosteric inhibitor</note>
    </ligand>
</feature>
<feature type="binding site" evidence="1">
    <location>
        <position position="21"/>
    </location>
    <ligand>
        <name>UTP</name>
        <dbReference type="ChEBI" id="CHEBI:46398"/>
    </ligand>
</feature>
<feature type="binding site" evidence="1">
    <location>
        <begin position="22"/>
        <end position="27"/>
    </location>
    <ligand>
        <name>ATP</name>
        <dbReference type="ChEBI" id="CHEBI:30616"/>
    </ligand>
</feature>
<feature type="binding site" evidence="1">
    <location>
        <position position="79"/>
    </location>
    <ligand>
        <name>ATP</name>
        <dbReference type="ChEBI" id="CHEBI:30616"/>
    </ligand>
</feature>
<feature type="binding site" evidence="1">
    <location>
        <position position="79"/>
    </location>
    <ligand>
        <name>Mg(2+)</name>
        <dbReference type="ChEBI" id="CHEBI:18420"/>
    </ligand>
</feature>
<feature type="binding site" evidence="1">
    <location>
        <position position="147"/>
    </location>
    <ligand>
        <name>Mg(2+)</name>
        <dbReference type="ChEBI" id="CHEBI:18420"/>
    </ligand>
</feature>
<feature type="binding site" evidence="1">
    <location>
        <begin position="154"/>
        <end position="156"/>
    </location>
    <ligand>
        <name>CTP</name>
        <dbReference type="ChEBI" id="CHEBI:37563"/>
        <note>allosteric inhibitor</note>
    </ligand>
</feature>
<feature type="binding site" evidence="1">
    <location>
        <begin position="194"/>
        <end position="199"/>
    </location>
    <ligand>
        <name>CTP</name>
        <dbReference type="ChEBI" id="CHEBI:37563"/>
        <note>allosteric inhibitor</note>
    </ligand>
</feature>
<feature type="binding site" evidence="1">
    <location>
        <begin position="194"/>
        <end position="199"/>
    </location>
    <ligand>
        <name>UTP</name>
        <dbReference type="ChEBI" id="CHEBI:46398"/>
    </ligand>
</feature>
<feature type="binding site" evidence="1">
    <location>
        <position position="230"/>
    </location>
    <ligand>
        <name>CTP</name>
        <dbReference type="ChEBI" id="CHEBI:37563"/>
        <note>allosteric inhibitor</note>
    </ligand>
</feature>
<feature type="binding site" evidence="1">
    <location>
        <position position="230"/>
    </location>
    <ligand>
        <name>UTP</name>
        <dbReference type="ChEBI" id="CHEBI:46398"/>
    </ligand>
</feature>
<feature type="binding site" evidence="1">
    <location>
        <position position="359"/>
    </location>
    <ligand>
        <name>L-glutamine</name>
        <dbReference type="ChEBI" id="CHEBI:58359"/>
    </ligand>
</feature>
<feature type="binding site" evidence="1">
    <location>
        <begin position="387"/>
        <end position="390"/>
    </location>
    <ligand>
        <name>L-glutamine</name>
        <dbReference type="ChEBI" id="CHEBI:58359"/>
    </ligand>
</feature>
<feature type="binding site" evidence="1">
    <location>
        <position position="410"/>
    </location>
    <ligand>
        <name>L-glutamine</name>
        <dbReference type="ChEBI" id="CHEBI:58359"/>
    </ligand>
</feature>
<feature type="binding site" evidence="1">
    <location>
        <position position="478"/>
    </location>
    <ligand>
        <name>L-glutamine</name>
        <dbReference type="ChEBI" id="CHEBI:58359"/>
    </ligand>
</feature>
<keyword id="KW-0067">ATP-binding</keyword>
<keyword id="KW-0315">Glutamine amidotransferase</keyword>
<keyword id="KW-0436">Ligase</keyword>
<keyword id="KW-0460">Magnesium</keyword>
<keyword id="KW-0479">Metal-binding</keyword>
<keyword id="KW-0547">Nucleotide-binding</keyword>
<keyword id="KW-0665">Pyrimidine biosynthesis</keyword>
<keyword id="KW-1185">Reference proteome</keyword>
<accession>Q7MAI3</accession>
<protein>
    <recommendedName>
        <fullName evidence="1">CTP synthase</fullName>
        <ecNumber evidence="1">6.3.4.2</ecNumber>
    </recommendedName>
    <alternativeName>
        <fullName evidence="1">Cytidine 5'-triphosphate synthase</fullName>
    </alternativeName>
    <alternativeName>
        <fullName evidence="1">Cytidine triphosphate synthetase</fullName>
        <shortName evidence="1">CTP synthetase</shortName>
        <shortName evidence="1">CTPS</shortName>
    </alternativeName>
    <alternativeName>
        <fullName evidence="1">UTP--ammonia ligase</fullName>
    </alternativeName>
</protein>
<evidence type="ECO:0000255" key="1">
    <source>
        <dbReference type="HAMAP-Rule" id="MF_01227"/>
    </source>
</evidence>
<reference key="1">
    <citation type="journal article" date="2003" name="Proc. Natl. Acad. Sci. U.S.A.">
        <title>Complete genome sequence and analysis of Wolinella succinogenes.</title>
        <authorList>
            <person name="Baar C."/>
            <person name="Eppinger M."/>
            <person name="Raddatz G."/>
            <person name="Simon J."/>
            <person name="Lanz C."/>
            <person name="Klimmek O."/>
            <person name="Nandakumar R."/>
            <person name="Gross R."/>
            <person name="Rosinus A."/>
            <person name="Keller H."/>
            <person name="Jagtap P."/>
            <person name="Linke B."/>
            <person name="Meyer F."/>
            <person name="Lederer H."/>
            <person name="Schuster S.C."/>
        </authorList>
    </citation>
    <scope>NUCLEOTIDE SEQUENCE [LARGE SCALE GENOMIC DNA]</scope>
    <source>
        <strain>ATCC 29543 / DSM 1740 / CCUG 13145 / JCM 31913 / LMG 7466 / NCTC 11488 / FDC 602W</strain>
    </source>
</reference>
<comment type="function">
    <text evidence="1">Catalyzes the ATP-dependent amination of UTP to CTP with either L-glutamine or ammonia as the source of nitrogen. Regulates intracellular CTP levels through interactions with the four ribonucleotide triphosphates.</text>
</comment>
<comment type="catalytic activity">
    <reaction evidence="1">
        <text>UTP + L-glutamine + ATP + H2O = CTP + L-glutamate + ADP + phosphate + 2 H(+)</text>
        <dbReference type="Rhea" id="RHEA:26426"/>
        <dbReference type="ChEBI" id="CHEBI:15377"/>
        <dbReference type="ChEBI" id="CHEBI:15378"/>
        <dbReference type="ChEBI" id="CHEBI:29985"/>
        <dbReference type="ChEBI" id="CHEBI:30616"/>
        <dbReference type="ChEBI" id="CHEBI:37563"/>
        <dbReference type="ChEBI" id="CHEBI:43474"/>
        <dbReference type="ChEBI" id="CHEBI:46398"/>
        <dbReference type="ChEBI" id="CHEBI:58359"/>
        <dbReference type="ChEBI" id="CHEBI:456216"/>
        <dbReference type="EC" id="6.3.4.2"/>
    </reaction>
</comment>
<comment type="catalytic activity">
    <reaction evidence="1">
        <text>L-glutamine + H2O = L-glutamate + NH4(+)</text>
        <dbReference type="Rhea" id="RHEA:15889"/>
        <dbReference type="ChEBI" id="CHEBI:15377"/>
        <dbReference type="ChEBI" id="CHEBI:28938"/>
        <dbReference type="ChEBI" id="CHEBI:29985"/>
        <dbReference type="ChEBI" id="CHEBI:58359"/>
    </reaction>
</comment>
<comment type="catalytic activity">
    <reaction evidence="1">
        <text>UTP + NH4(+) + ATP = CTP + ADP + phosphate + 2 H(+)</text>
        <dbReference type="Rhea" id="RHEA:16597"/>
        <dbReference type="ChEBI" id="CHEBI:15378"/>
        <dbReference type="ChEBI" id="CHEBI:28938"/>
        <dbReference type="ChEBI" id="CHEBI:30616"/>
        <dbReference type="ChEBI" id="CHEBI:37563"/>
        <dbReference type="ChEBI" id="CHEBI:43474"/>
        <dbReference type="ChEBI" id="CHEBI:46398"/>
        <dbReference type="ChEBI" id="CHEBI:456216"/>
    </reaction>
</comment>
<comment type="activity regulation">
    <text evidence="1">Allosterically activated by GTP, when glutamine is the substrate; GTP has no effect on the reaction when ammonia is the substrate. The allosteric effector GTP functions by stabilizing the protein conformation that binds the tetrahedral intermediate(s) formed during glutamine hydrolysis. Inhibited by the product CTP, via allosteric rather than competitive inhibition.</text>
</comment>
<comment type="pathway">
    <text evidence="1">Pyrimidine metabolism; CTP biosynthesis via de novo pathway; CTP from UDP: step 2/2.</text>
</comment>
<comment type="subunit">
    <text evidence="1">Homotetramer.</text>
</comment>
<comment type="miscellaneous">
    <text evidence="1">CTPSs have evolved a hybrid strategy for distinguishing between UTP and CTP. The overlapping regions of the product feedback inhibitory and substrate sites recognize a common feature in both compounds, the triphosphate moiety. To differentiate isosteric substrate and product pyrimidine rings, an additional pocket far from the expected kinase/ligase catalytic site, specifically recognizes the cytosine and ribose portions of the product inhibitor.</text>
</comment>
<comment type="similarity">
    <text evidence="1">Belongs to the CTP synthase family.</text>
</comment>
<sequence>MSESKKNPETKYIFVTGGVLSSLGKGITSSSVATLLKHSGFNVGILKIDPYINVDPGTMSPFEHGEVFVTYDGAETDLDIGHYERFLNTNFSSKHNFTTGQVYLSVIERERRGGYLGKTIQVIPHIVDEIKHRVRLAGEGKEFLVVELGGTVGDIEGLPFLEAMREMKHELGLERVISVHVTLIPLIKAAGELKTKPTQHSVQELRRIGITPQIIIARSEKPLPKELKKKLSLGCDVDYDSVIVAEDAPTIYQVPLNFMKEDILTPIARRFNMPKIEPKMEEWNRLVKQILAPKDEVTIAFVGKYLSLKESYKSLIEALTHAGANLDTKVNIKWCDSEEIESSGVEPLRYVDGILVPGGFGERGVKGKMEAIRFARENKIPFLGICLGMQLAMIEFARNVLGIAEANSMEFDPQTPEPIIYLIEDFIDQQGNKQVRTHTSPMGGTMRLGEYECGLKEGSQTKAAYQGESLIKERHRHRYEANPKYRERIEQAGLIVSGESEGLIEALELVDHPWFIGVQFHPEFTSRLQNPNPVILTFIQKSLELKKVDRDS</sequence>
<organism>
    <name type="scientific">Wolinella succinogenes (strain ATCC 29543 / DSM 1740 / CCUG 13145 / JCM 31913 / LMG 7466 / NCTC 11488 / FDC 602W)</name>
    <name type="common">Vibrio succinogenes</name>
    <dbReference type="NCBI Taxonomy" id="273121"/>
    <lineage>
        <taxon>Bacteria</taxon>
        <taxon>Pseudomonadati</taxon>
        <taxon>Campylobacterota</taxon>
        <taxon>Epsilonproteobacteria</taxon>
        <taxon>Campylobacterales</taxon>
        <taxon>Helicobacteraceae</taxon>
        <taxon>Wolinella</taxon>
    </lineage>
</organism>